<reference key="1">
    <citation type="submission" date="2009-07" db="EMBL/GenBank/DDBJ databases">
        <title>Complete sequence of Pectobacterium carotovorum subsp. carotovorum PC1.</title>
        <authorList>
            <consortium name="US DOE Joint Genome Institute"/>
            <person name="Lucas S."/>
            <person name="Copeland A."/>
            <person name="Lapidus A."/>
            <person name="Glavina del Rio T."/>
            <person name="Tice H."/>
            <person name="Bruce D."/>
            <person name="Goodwin L."/>
            <person name="Pitluck S."/>
            <person name="Munk A.C."/>
            <person name="Brettin T."/>
            <person name="Detter J.C."/>
            <person name="Han C."/>
            <person name="Tapia R."/>
            <person name="Larimer F."/>
            <person name="Land M."/>
            <person name="Hauser L."/>
            <person name="Kyrpides N."/>
            <person name="Mikhailova N."/>
            <person name="Balakrishnan V."/>
            <person name="Glasner J."/>
            <person name="Perna N.T."/>
        </authorList>
    </citation>
    <scope>NUCLEOTIDE SEQUENCE [LARGE SCALE GENOMIC DNA]</scope>
    <source>
        <strain>PC1</strain>
    </source>
</reference>
<feature type="chain" id="PRO_1000213424" description="UPF0227 protein PC1_2487">
    <location>
        <begin position="1"/>
        <end position="180"/>
    </location>
</feature>
<gene>
    <name type="ordered locus">PC1_2487</name>
</gene>
<organism>
    <name type="scientific">Pectobacterium carotovorum subsp. carotovorum (strain PC1)</name>
    <dbReference type="NCBI Taxonomy" id="561230"/>
    <lineage>
        <taxon>Bacteria</taxon>
        <taxon>Pseudomonadati</taxon>
        <taxon>Pseudomonadota</taxon>
        <taxon>Gammaproteobacteria</taxon>
        <taxon>Enterobacterales</taxon>
        <taxon>Pectobacteriaceae</taxon>
        <taxon>Pectobacterium</taxon>
    </lineage>
</organism>
<accession>C6DKR7</accession>
<protein>
    <recommendedName>
        <fullName evidence="1">UPF0227 protein PC1_2487</fullName>
    </recommendedName>
</protein>
<evidence type="ECO:0000255" key="1">
    <source>
        <dbReference type="HAMAP-Rule" id="MF_01047"/>
    </source>
</evidence>
<sequence>MIIYLHGFDSTSPGNHEKVLQLQFIDEDVRLISYSTLHPRHDMQHLLKQVDKMIQHSDDDRPLICGVGLGGFWAERVGFLCDIRQVIVNPNLFPQENMGGKIDRPEEYVDIATKCVANFREKNRDRCMVMLSRHDEMLDSQRSAQMLGAYYEIVWDDIQTHKFKSISPHLQRIKAFKTLG</sequence>
<name>Y2487_PECCP</name>
<comment type="similarity">
    <text evidence="1">Belongs to the UPF0227 family.</text>
</comment>
<proteinExistence type="inferred from homology"/>
<dbReference type="EMBL" id="CP001657">
    <property type="protein sequence ID" value="ACT13518.1"/>
    <property type="molecule type" value="Genomic_DNA"/>
</dbReference>
<dbReference type="SMR" id="C6DKR7"/>
<dbReference type="STRING" id="561230.PC1_2487"/>
<dbReference type="ESTHER" id="erwct-q6d673">
    <property type="family name" value="abh_upf00227"/>
</dbReference>
<dbReference type="KEGG" id="pct:PC1_2487"/>
<dbReference type="eggNOG" id="COG3150">
    <property type="taxonomic scope" value="Bacteria"/>
</dbReference>
<dbReference type="HOGENOM" id="CLU_128769_0_0_6"/>
<dbReference type="OrthoDB" id="6469735at2"/>
<dbReference type="Proteomes" id="UP000002736">
    <property type="component" value="Chromosome"/>
</dbReference>
<dbReference type="Gene3D" id="3.40.50.1820">
    <property type="entry name" value="alpha/beta hydrolase"/>
    <property type="match status" value="1"/>
</dbReference>
<dbReference type="HAMAP" id="MF_01047">
    <property type="entry name" value="UPF0227"/>
    <property type="match status" value="1"/>
</dbReference>
<dbReference type="InterPro" id="IPR029058">
    <property type="entry name" value="AB_hydrolase_fold"/>
</dbReference>
<dbReference type="InterPro" id="IPR022987">
    <property type="entry name" value="UPF0227"/>
</dbReference>
<dbReference type="InterPro" id="IPR008886">
    <property type="entry name" value="UPF0227/Esterase_YqiA"/>
</dbReference>
<dbReference type="NCBIfam" id="NF003431">
    <property type="entry name" value="PRK04940.1"/>
    <property type="match status" value="1"/>
</dbReference>
<dbReference type="PANTHER" id="PTHR35602">
    <property type="entry name" value="ESTERASE YQIA-RELATED"/>
    <property type="match status" value="1"/>
</dbReference>
<dbReference type="PANTHER" id="PTHR35602:SF2">
    <property type="entry name" value="UPF0227 PROTEIN YCFP"/>
    <property type="match status" value="1"/>
</dbReference>
<dbReference type="Pfam" id="PF05728">
    <property type="entry name" value="UPF0227"/>
    <property type="match status" value="1"/>
</dbReference>
<dbReference type="SUPFAM" id="SSF53474">
    <property type="entry name" value="alpha/beta-Hydrolases"/>
    <property type="match status" value="1"/>
</dbReference>